<feature type="chain" id="PRO_0000271268" description="Protein ups1 homolog">
    <location>
        <begin position="1"/>
        <end position="171"/>
    </location>
</feature>
<feature type="domain" description="PRELI/MSF1" evidence="3">
    <location>
        <begin position="2"/>
        <end position="171"/>
    </location>
</feature>
<feature type="region of interest" description="Required for mitochondrial targeting" evidence="2">
    <location>
        <begin position="1"/>
        <end position="79"/>
    </location>
</feature>
<comment type="function">
    <text evidence="2">Required for maintenance of normal mitochondrial morphology as well as PCP1-dependent processing of MGM1.</text>
</comment>
<comment type="subcellular location">
    <subcellularLocation>
        <location evidence="1">Mitochondrion inner membrane</location>
        <topology evidence="1">Peripheral membrane protein</topology>
        <orientation evidence="1">Intermembrane side</orientation>
    </subcellularLocation>
    <subcellularLocation>
        <location evidence="1">Mitochondrion intermembrane space</location>
    </subcellularLocation>
</comment>
<sequence>MTAICTDKTELNASWNTVSSAWLTRYPNPYSLHVVSADVLERYVDDEGRLYTERLLVKQGRLPRWASDLLNVNKSYILERSVIDPSKQELKSETFNLDHVKILRVIEYSRFIQSSENCSKTIVDTIAKFVSPLRFGLGRRVQKYSLKRFQEQLSSSRRGLLYVIQQKFQPS</sequence>
<protein>
    <recommendedName>
        <fullName>Protein ups1 homolog</fullName>
    </recommendedName>
</protein>
<dbReference type="EMBL" id="CU329670">
    <property type="protein sequence ID" value="CAB55177.1"/>
    <property type="molecule type" value="Genomic_DNA"/>
</dbReference>
<dbReference type="PIR" id="T39247">
    <property type="entry name" value="T39247"/>
</dbReference>
<dbReference type="SMR" id="Q9UT07"/>
<dbReference type="FunCoup" id="Q9UT07">
    <property type="interactions" value="142"/>
</dbReference>
<dbReference type="STRING" id="284812.Q9UT07"/>
<dbReference type="iPTMnet" id="Q9UT07"/>
<dbReference type="PaxDb" id="4896-SPAP8A3.10.1"/>
<dbReference type="EnsemblFungi" id="SPAP8A3.10.1">
    <property type="protein sequence ID" value="SPAP8A3.10.1:pep"/>
    <property type="gene ID" value="SPAP8A3.10"/>
</dbReference>
<dbReference type="KEGG" id="spo:2542962"/>
<dbReference type="PomBase" id="SPAP8A3.10"/>
<dbReference type="VEuPathDB" id="FungiDB:SPAP8A3.10"/>
<dbReference type="eggNOG" id="KOG3337">
    <property type="taxonomic scope" value="Eukaryota"/>
</dbReference>
<dbReference type="HOGENOM" id="CLU_067902_3_1_1"/>
<dbReference type="InParanoid" id="Q9UT07"/>
<dbReference type="OMA" id="WNLNHTK"/>
<dbReference type="PhylomeDB" id="Q9UT07"/>
<dbReference type="Reactome" id="R-SPO-6803204">
    <property type="pathway name" value="TP53 Regulates Transcription of Genes Involved in Cytochrome C Release"/>
</dbReference>
<dbReference type="PRO" id="PR:Q9UT07"/>
<dbReference type="Proteomes" id="UP000002485">
    <property type="component" value="Chromosome I"/>
</dbReference>
<dbReference type="GO" id="GO:0005829">
    <property type="term" value="C:cytosol"/>
    <property type="evidence" value="ECO:0007005"/>
    <property type="project" value="PomBase"/>
</dbReference>
<dbReference type="GO" id="GO:0031314">
    <property type="term" value="C:extrinsic component of mitochondrial inner membrane"/>
    <property type="evidence" value="ECO:0000266"/>
    <property type="project" value="PomBase"/>
</dbReference>
<dbReference type="GO" id="GO:0005758">
    <property type="term" value="C:mitochondrial intermembrane space"/>
    <property type="evidence" value="ECO:0000250"/>
    <property type="project" value="UniProtKB"/>
</dbReference>
<dbReference type="GO" id="GO:0005739">
    <property type="term" value="C:mitochondrion"/>
    <property type="evidence" value="ECO:0007005"/>
    <property type="project" value="PomBase"/>
</dbReference>
<dbReference type="GO" id="GO:0005634">
    <property type="term" value="C:nucleus"/>
    <property type="evidence" value="ECO:0007005"/>
    <property type="project" value="PomBase"/>
</dbReference>
<dbReference type="GO" id="GO:1990050">
    <property type="term" value="F:phosphatidic acid transfer activity"/>
    <property type="evidence" value="ECO:0000318"/>
    <property type="project" value="GO_Central"/>
</dbReference>
<dbReference type="GO" id="GO:0120010">
    <property type="term" value="P:intermembrane phospholipid transfer"/>
    <property type="evidence" value="ECO:0000304"/>
    <property type="project" value="PomBase"/>
</dbReference>
<dbReference type="GO" id="GO:0007006">
    <property type="term" value="P:mitochondrial membrane organization"/>
    <property type="evidence" value="ECO:0000305"/>
    <property type="project" value="PomBase"/>
</dbReference>
<dbReference type="GO" id="GO:0045332">
    <property type="term" value="P:phospholipid translocation"/>
    <property type="evidence" value="ECO:0000266"/>
    <property type="project" value="PomBase"/>
</dbReference>
<dbReference type="GO" id="GO:0015914">
    <property type="term" value="P:phospholipid transport"/>
    <property type="evidence" value="ECO:0000318"/>
    <property type="project" value="GO_Central"/>
</dbReference>
<dbReference type="InterPro" id="IPR006797">
    <property type="entry name" value="PRELI/MSF1_dom"/>
</dbReference>
<dbReference type="InterPro" id="IPR037365">
    <property type="entry name" value="Slowmo/Ups"/>
</dbReference>
<dbReference type="PANTHER" id="PTHR11158">
    <property type="entry name" value="MSF1/PX19 RELATED"/>
    <property type="match status" value="1"/>
</dbReference>
<dbReference type="Pfam" id="PF04707">
    <property type="entry name" value="PRELI"/>
    <property type="match status" value="1"/>
</dbReference>
<dbReference type="PROSITE" id="PS50904">
    <property type="entry name" value="PRELI_MSF1"/>
    <property type="match status" value="1"/>
</dbReference>
<evidence type="ECO:0000250" key="1"/>
<evidence type="ECO:0000250" key="2">
    <source>
        <dbReference type="UniProtKB" id="Q05776"/>
    </source>
</evidence>
<evidence type="ECO:0000255" key="3">
    <source>
        <dbReference type="PROSITE-ProRule" id="PRU00158"/>
    </source>
</evidence>
<evidence type="ECO:0000305" key="4"/>
<reference key="1">
    <citation type="journal article" date="2002" name="Nature">
        <title>The genome sequence of Schizosaccharomyces pombe.</title>
        <authorList>
            <person name="Wood V."/>
            <person name="Gwilliam R."/>
            <person name="Rajandream M.A."/>
            <person name="Lyne M.H."/>
            <person name="Lyne R."/>
            <person name="Stewart A."/>
            <person name="Sgouros J.G."/>
            <person name="Peat N."/>
            <person name="Hayles J."/>
            <person name="Baker S.G."/>
            <person name="Basham D."/>
            <person name="Bowman S."/>
            <person name="Brooks K."/>
            <person name="Brown D."/>
            <person name="Brown S."/>
            <person name="Chillingworth T."/>
            <person name="Churcher C.M."/>
            <person name="Collins M."/>
            <person name="Connor R."/>
            <person name="Cronin A."/>
            <person name="Davis P."/>
            <person name="Feltwell T."/>
            <person name="Fraser A."/>
            <person name="Gentles S."/>
            <person name="Goble A."/>
            <person name="Hamlin N."/>
            <person name="Harris D.E."/>
            <person name="Hidalgo J."/>
            <person name="Hodgson G."/>
            <person name="Holroyd S."/>
            <person name="Hornsby T."/>
            <person name="Howarth S."/>
            <person name="Huckle E.J."/>
            <person name="Hunt S."/>
            <person name="Jagels K."/>
            <person name="James K.D."/>
            <person name="Jones L."/>
            <person name="Jones M."/>
            <person name="Leather S."/>
            <person name="McDonald S."/>
            <person name="McLean J."/>
            <person name="Mooney P."/>
            <person name="Moule S."/>
            <person name="Mungall K.L."/>
            <person name="Murphy L.D."/>
            <person name="Niblett D."/>
            <person name="Odell C."/>
            <person name="Oliver K."/>
            <person name="O'Neil S."/>
            <person name="Pearson D."/>
            <person name="Quail M.A."/>
            <person name="Rabbinowitsch E."/>
            <person name="Rutherford K.M."/>
            <person name="Rutter S."/>
            <person name="Saunders D."/>
            <person name="Seeger K."/>
            <person name="Sharp S."/>
            <person name="Skelton J."/>
            <person name="Simmonds M.N."/>
            <person name="Squares R."/>
            <person name="Squares S."/>
            <person name="Stevens K."/>
            <person name="Taylor K."/>
            <person name="Taylor R.G."/>
            <person name="Tivey A."/>
            <person name="Walsh S.V."/>
            <person name="Warren T."/>
            <person name="Whitehead S."/>
            <person name="Woodward J.R."/>
            <person name="Volckaert G."/>
            <person name="Aert R."/>
            <person name="Robben J."/>
            <person name="Grymonprez B."/>
            <person name="Weltjens I."/>
            <person name="Vanstreels E."/>
            <person name="Rieger M."/>
            <person name="Schaefer M."/>
            <person name="Mueller-Auer S."/>
            <person name="Gabel C."/>
            <person name="Fuchs M."/>
            <person name="Duesterhoeft A."/>
            <person name="Fritzc C."/>
            <person name="Holzer E."/>
            <person name="Moestl D."/>
            <person name="Hilbert H."/>
            <person name="Borzym K."/>
            <person name="Langer I."/>
            <person name="Beck A."/>
            <person name="Lehrach H."/>
            <person name="Reinhardt R."/>
            <person name="Pohl T.M."/>
            <person name="Eger P."/>
            <person name="Zimmermann W."/>
            <person name="Wedler H."/>
            <person name="Wambutt R."/>
            <person name="Purnelle B."/>
            <person name="Goffeau A."/>
            <person name="Cadieu E."/>
            <person name="Dreano S."/>
            <person name="Gloux S."/>
            <person name="Lelaure V."/>
            <person name="Mottier S."/>
            <person name="Galibert F."/>
            <person name="Aves S.J."/>
            <person name="Xiang Z."/>
            <person name="Hunt C."/>
            <person name="Moore K."/>
            <person name="Hurst S.M."/>
            <person name="Lucas M."/>
            <person name="Rochet M."/>
            <person name="Gaillardin C."/>
            <person name="Tallada V.A."/>
            <person name="Garzon A."/>
            <person name="Thode G."/>
            <person name="Daga R.R."/>
            <person name="Cruzado L."/>
            <person name="Jimenez J."/>
            <person name="Sanchez M."/>
            <person name="del Rey F."/>
            <person name="Benito J."/>
            <person name="Dominguez A."/>
            <person name="Revuelta J.L."/>
            <person name="Moreno S."/>
            <person name="Armstrong J."/>
            <person name="Forsburg S.L."/>
            <person name="Cerutti L."/>
            <person name="Lowe T."/>
            <person name="McCombie W.R."/>
            <person name="Paulsen I."/>
            <person name="Potashkin J."/>
            <person name="Shpakovski G.V."/>
            <person name="Ussery D."/>
            <person name="Barrell B.G."/>
            <person name="Nurse P."/>
        </authorList>
    </citation>
    <scope>NUCLEOTIDE SEQUENCE [LARGE SCALE GENOMIC DNA]</scope>
    <source>
        <strain>972 / ATCC 24843</strain>
    </source>
</reference>
<reference evidence="4" key="2">
    <citation type="journal article" date="2006" name="Nat. Biotechnol.">
        <title>ORFeome cloning and global analysis of protein localization in the fission yeast Schizosaccharomyces pombe.</title>
        <authorList>
            <person name="Matsuyama A."/>
            <person name="Arai R."/>
            <person name="Yashiroda Y."/>
            <person name="Shirai A."/>
            <person name="Kamata A."/>
            <person name="Sekido S."/>
            <person name="Kobayashi Y."/>
            <person name="Hashimoto A."/>
            <person name="Hamamoto M."/>
            <person name="Hiraoka Y."/>
            <person name="Horinouchi S."/>
            <person name="Yoshida M."/>
        </authorList>
    </citation>
    <scope>SUBCELLULAR LOCATION [LARGE SCALE ANALYSIS]</scope>
</reference>
<accession>Q9UT07</accession>
<keyword id="KW-0472">Membrane</keyword>
<keyword id="KW-0496">Mitochondrion</keyword>
<keyword id="KW-0999">Mitochondrion inner membrane</keyword>
<keyword id="KW-1185">Reference proteome</keyword>
<name>UPS1_SCHPO</name>
<gene>
    <name type="ORF">SPAP8A3.10</name>
</gene>
<organism>
    <name type="scientific">Schizosaccharomyces pombe (strain 972 / ATCC 24843)</name>
    <name type="common">Fission yeast</name>
    <dbReference type="NCBI Taxonomy" id="284812"/>
    <lineage>
        <taxon>Eukaryota</taxon>
        <taxon>Fungi</taxon>
        <taxon>Dikarya</taxon>
        <taxon>Ascomycota</taxon>
        <taxon>Taphrinomycotina</taxon>
        <taxon>Schizosaccharomycetes</taxon>
        <taxon>Schizosaccharomycetales</taxon>
        <taxon>Schizosaccharomycetaceae</taxon>
        <taxon>Schizosaccharomyces</taxon>
    </lineage>
</organism>
<proteinExistence type="inferred from homology"/>